<dbReference type="EC" id="1.7.1.1"/>
<dbReference type="EMBL" id="Z19050">
    <property type="protein sequence ID" value="CAA79494.1"/>
    <property type="molecule type" value="Genomic_DNA"/>
</dbReference>
<dbReference type="EMBL" id="AC012193">
    <property type="protein sequence ID" value="AAG51627.1"/>
    <property type="molecule type" value="Genomic_DNA"/>
</dbReference>
<dbReference type="EMBL" id="CP002684">
    <property type="protein sequence ID" value="AEE36018.1"/>
    <property type="molecule type" value="Genomic_DNA"/>
</dbReference>
<dbReference type="EMBL" id="AY090950">
    <property type="protein sequence ID" value="AAM13997.1"/>
    <property type="molecule type" value="mRNA"/>
</dbReference>
<dbReference type="EMBL" id="AF424624">
    <property type="protein sequence ID" value="AAL11617.1"/>
    <property type="molecule type" value="mRNA"/>
</dbReference>
<dbReference type="EMBL" id="BT000989">
    <property type="protein sequence ID" value="AAN41389.1"/>
    <property type="molecule type" value="mRNA"/>
</dbReference>
<dbReference type="EMBL" id="X13434">
    <property type="protein sequence ID" value="CAA31786.1"/>
    <property type="molecule type" value="mRNA"/>
</dbReference>
<dbReference type="EMBL" id="X13436">
    <property type="protein sequence ID" value="CAA31788.1"/>
    <property type="molecule type" value="Genomic_DNA"/>
</dbReference>
<dbReference type="PIR" id="E96807">
    <property type="entry name" value="E96807"/>
</dbReference>
<dbReference type="PIR" id="S35228">
    <property type="entry name" value="S35228"/>
</dbReference>
<dbReference type="RefSeq" id="NP_177899.1">
    <property type="nucleotide sequence ID" value="NM_106425.3"/>
</dbReference>
<dbReference type="SMR" id="P11832"/>
<dbReference type="BioGRID" id="29331">
    <property type="interactions" value="8"/>
</dbReference>
<dbReference type="FunCoup" id="P11832">
    <property type="interactions" value="114"/>
</dbReference>
<dbReference type="IntAct" id="P11832">
    <property type="interactions" value="6"/>
</dbReference>
<dbReference type="STRING" id="3702.P11832"/>
<dbReference type="iPTMnet" id="P11832"/>
<dbReference type="PaxDb" id="3702-AT1G77760.1"/>
<dbReference type="ProteomicsDB" id="251150"/>
<dbReference type="EnsemblPlants" id="AT1G77760.1">
    <property type="protein sequence ID" value="AT1G77760.1"/>
    <property type="gene ID" value="AT1G77760"/>
</dbReference>
<dbReference type="GeneID" id="844112"/>
<dbReference type="Gramene" id="AT1G77760.1">
    <property type="protein sequence ID" value="AT1G77760.1"/>
    <property type="gene ID" value="AT1G77760"/>
</dbReference>
<dbReference type="KEGG" id="ath:AT1G77760"/>
<dbReference type="Araport" id="AT1G77760"/>
<dbReference type="TAIR" id="AT1G77760">
    <property type="gene designation" value="NIA1"/>
</dbReference>
<dbReference type="eggNOG" id="KOG0534">
    <property type="taxonomic scope" value="Eukaryota"/>
</dbReference>
<dbReference type="eggNOG" id="KOG0535">
    <property type="taxonomic scope" value="Eukaryota"/>
</dbReference>
<dbReference type="eggNOG" id="KOG0537">
    <property type="taxonomic scope" value="Eukaryota"/>
</dbReference>
<dbReference type="HOGENOM" id="CLU_003827_4_1_1"/>
<dbReference type="InParanoid" id="P11832"/>
<dbReference type="OMA" id="DWSIEIT"/>
<dbReference type="PhylomeDB" id="P11832"/>
<dbReference type="BioCyc" id="MetaCyc:AT1G77760-MONOMER"/>
<dbReference type="PRO" id="PR:P11832"/>
<dbReference type="Proteomes" id="UP000006548">
    <property type="component" value="Chromosome 1"/>
</dbReference>
<dbReference type="ExpressionAtlas" id="P11832">
    <property type="expression patterns" value="baseline and differential"/>
</dbReference>
<dbReference type="GO" id="GO:0005829">
    <property type="term" value="C:cytosol"/>
    <property type="evidence" value="ECO:0000304"/>
    <property type="project" value="TAIR"/>
</dbReference>
<dbReference type="GO" id="GO:0071949">
    <property type="term" value="F:FAD binding"/>
    <property type="evidence" value="ECO:0000250"/>
    <property type="project" value="UniProtKB"/>
</dbReference>
<dbReference type="GO" id="GO:0020037">
    <property type="term" value="F:heme binding"/>
    <property type="evidence" value="ECO:0007669"/>
    <property type="project" value="InterPro"/>
</dbReference>
<dbReference type="GO" id="GO:0030151">
    <property type="term" value="F:molybdenum ion binding"/>
    <property type="evidence" value="ECO:0000250"/>
    <property type="project" value="UniProtKB"/>
</dbReference>
<dbReference type="GO" id="GO:0043546">
    <property type="term" value="F:molybdopterin cofactor binding"/>
    <property type="evidence" value="ECO:0007669"/>
    <property type="project" value="InterPro"/>
</dbReference>
<dbReference type="GO" id="GO:0009703">
    <property type="term" value="F:nitrate reductase (NADH) activity"/>
    <property type="evidence" value="ECO:0007669"/>
    <property type="project" value="UniProtKB-EC"/>
</dbReference>
<dbReference type="GO" id="GO:0050464">
    <property type="term" value="F:nitrate reductase (NADPH) activity"/>
    <property type="evidence" value="ECO:0007669"/>
    <property type="project" value="InterPro"/>
</dbReference>
<dbReference type="GO" id="GO:0008940">
    <property type="term" value="F:nitrate reductase activity"/>
    <property type="evidence" value="ECO:0000314"/>
    <property type="project" value="CACAO"/>
</dbReference>
<dbReference type="GO" id="GO:0042128">
    <property type="term" value="P:nitrate assimilation"/>
    <property type="evidence" value="ECO:0000315"/>
    <property type="project" value="TAIR"/>
</dbReference>
<dbReference type="GO" id="GO:0006809">
    <property type="term" value="P:nitric oxide biosynthetic process"/>
    <property type="evidence" value="ECO:0000315"/>
    <property type="project" value="TAIR"/>
</dbReference>
<dbReference type="GO" id="GO:0009635">
    <property type="term" value="P:response to herbicide"/>
    <property type="evidence" value="ECO:0007669"/>
    <property type="project" value="UniProtKB-KW"/>
</dbReference>
<dbReference type="GO" id="GO:0009416">
    <property type="term" value="P:response to light stimulus"/>
    <property type="evidence" value="ECO:0000315"/>
    <property type="project" value="TAIR"/>
</dbReference>
<dbReference type="CDD" id="cd06183">
    <property type="entry name" value="cyt_b5_reduct_like"/>
    <property type="match status" value="1"/>
</dbReference>
<dbReference type="CDD" id="cd02112">
    <property type="entry name" value="eukary_NR_Moco"/>
    <property type="match status" value="1"/>
</dbReference>
<dbReference type="FunFam" id="2.40.30.10:FF:000021">
    <property type="entry name" value="NADH-cytochrome b5 reductase"/>
    <property type="match status" value="1"/>
</dbReference>
<dbReference type="FunFam" id="2.60.40.650:FF:000001">
    <property type="entry name" value="Nitrate reductase"/>
    <property type="match status" value="1"/>
</dbReference>
<dbReference type="FunFam" id="3.10.120.10:FF:000008">
    <property type="entry name" value="Nitrate reductase"/>
    <property type="match status" value="1"/>
</dbReference>
<dbReference type="FunFam" id="3.90.420.10:FF:000003">
    <property type="entry name" value="Nitrate reductase"/>
    <property type="match status" value="1"/>
</dbReference>
<dbReference type="FunFam" id="3.40.50.80:FF:000025">
    <property type="entry name" value="Nitrate reductase [NADH]"/>
    <property type="match status" value="1"/>
</dbReference>
<dbReference type="Gene3D" id="2.60.40.650">
    <property type="match status" value="1"/>
</dbReference>
<dbReference type="Gene3D" id="3.10.120.10">
    <property type="entry name" value="Cytochrome b5-like heme/steroid binding domain"/>
    <property type="match status" value="1"/>
</dbReference>
<dbReference type="Gene3D" id="3.40.50.80">
    <property type="entry name" value="Nucleotide-binding domain of ferredoxin-NADP reductase (FNR) module"/>
    <property type="match status" value="1"/>
</dbReference>
<dbReference type="Gene3D" id="3.90.420.10">
    <property type="entry name" value="Oxidoreductase, molybdopterin-binding domain"/>
    <property type="match status" value="1"/>
</dbReference>
<dbReference type="Gene3D" id="2.40.30.10">
    <property type="entry name" value="Translation factors"/>
    <property type="match status" value="1"/>
</dbReference>
<dbReference type="InterPro" id="IPR008333">
    <property type="entry name" value="Cbr1-like_FAD-bd_dom"/>
</dbReference>
<dbReference type="InterPro" id="IPR001199">
    <property type="entry name" value="Cyt_B5-like_heme/steroid-bd"/>
</dbReference>
<dbReference type="InterPro" id="IPR036400">
    <property type="entry name" value="Cyt_B5-like_heme/steroid_sf"/>
</dbReference>
<dbReference type="InterPro" id="IPR018506">
    <property type="entry name" value="Cyt_B5_heme-BS"/>
</dbReference>
<dbReference type="InterPro" id="IPR017927">
    <property type="entry name" value="FAD-bd_FR_type"/>
</dbReference>
<dbReference type="InterPro" id="IPR001709">
    <property type="entry name" value="Flavoprot_Pyr_Nucl_cyt_Rdtase"/>
</dbReference>
<dbReference type="InterPro" id="IPR039261">
    <property type="entry name" value="FNR_nucleotide-bd"/>
</dbReference>
<dbReference type="InterPro" id="IPR014756">
    <property type="entry name" value="Ig_E-set"/>
</dbReference>
<dbReference type="InterPro" id="IPR005066">
    <property type="entry name" value="MoCF_OxRdtse_dimer"/>
</dbReference>
<dbReference type="InterPro" id="IPR008335">
    <property type="entry name" value="Mopterin_OxRdtase_euk"/>
</dbReference>
<dbReference type="InterPro" id="IPR012137">
    <property type="entry name" value="Nitr_rd_NADH"/>
</dbReference>
<dbReference type="InterPro" id="IPR001433">
    <property type="entry name" value="OxRdtase_FAD/NAD-bd"/>
</dbReference>
<dbReference type="InterPro" id="IPR000572">
    <property type="entry name" value="OxRdtase_Mopterin-bd_dom"/>
</dbReference>
<dbReference type="InterPro" id="IPR036374">
    <property type="entry name" value="OxRdtase_Mopterin-bd_sf"/>
</dbReference>
<dbReference type="InterPro" id="IPR022407">
    <property type="entry name" value="OxRdtase_Mopterin_BS"/>
</dbReference>
<dbReference type="InterPro" id="IPR017938">
    <property type="entry name" value="Riboflavin_synthase-like_b-brl"/>
</dbReference>
<dbReference type="PANTHER" id="PTHR19372:SF7">
    <property type="entry name" value="SULFITE OXIDASE, MITOCHONDRIAL"/>
    <property type="match status" value="1"/>
</dbReference>
<dbReference type="PANTHER" id="PTHR19372">
    <property type="entry name" value="SULFITE REDUCTASE"/>
    <property type="match status" value="1"/>
</dbReference>
<dbReference type="Pfam" id="PF00173">
    <property type="entry name" value="Cyt-b5"/>
    <property type="match status" value="1"/>
</dbReference>
<dbReference type="Pfam" id="PF00970">
    <property type="entry name" value="FAD_binding_6"/>
    <property type="match status" value="1"/>
</dbReference>
<dbReference type="Pfam" id="PF03404">
    <property type="entry name" value="Mo-co_dimer"/>
    <property type="match status" value="1"/>
</dbReference>
<dbReference type="Pfam" id="PF00175">
    <property type="entry name" value="NAD_binding_1"/>
    <property type="match status" value="1"/>
</dbReference>
<dbReference type="Pfam" id="PF00174">
    <property type="entry name" value="Oxidored_molyb"/>
    <property type="match status" value="1"/>
</dbReference>
<dbReference type="PIRSF" id="PIRSF000233">
    <property type="entry name" value="Nitr_rd_NADH"/>
    <property type="match status" value="1"/>
</dbReference>
<dbReference type="PRINTS" id="PR00406">
    <property type="entry name" value="CYTB5RDTASE"/>
</dbReference>
<dbReference type="PRINTS" id="PR00363">
    <property type="entry name" value="CYTOCHROMEB5"/>
</dbReference>
<dbReference type="PRINTS" id="PR00407">
    <property type="entry name" value="EUMOPTERIN"/>
</dbReference>
<dbReference type="PRINTS" id="PR00371">
    <property type="entry name" value="FPNCR"/>
</dbReference>
<dbReference type="SMART" id="SM01117">
    <property type="entry name" value="Cyt-b5"/>
    <property type="match status" value="1"/>
</dbReference>
<dbReference type="SUPFAM" id="SSF55856">
    <property type="entry name" value="Cytochrome b5-like heme/steroid binding domain"/>
    <property type="match status" value="1"/>
</dbReference>
<dbReference type="SUPFAM" id="SSF81296">
    <property type="entry name" value="E set domains"/>
    <property type="match status" value="1"/>
</dbReference>
<dbReference type="SUPFAM" id="SSF52343">
    <property type="entry name" value="Ferredoxin reductase-like, C-terminal NADP-linked domain"/>
    <property type="match status" value="1"/>
</dbReference>
<dbReference type="SUPFAM" id="SSF56524">
    <property type="entry name" value="Oxidoreductase molybdopterin-binding domain"/>
    <property type="match status" value="1"/>
</dbReference>
<dbReference type="SUPFAM" id="SSF63380">
    <property type="entry name" value="Riboflavin synthase domain-like"/>
    <property type="match status" value="1"/>
</dbReference>
<dbReference type="PROSITE" id="PS00191">
    <property type="entry name" value="CYTOCHROME_B5_1"/>
    <property type="match status" value="1"/>
</dbReference>
<dbReference type="PROSITE" id="PS50255">
    <property type="entry name" value="CYTOCHROME_B5_2"/>
    <property type="match status" value="1"/>
</dbReference>
<dbReference type="PROSITE" id="PS51384">
    <property type="entry name" value="FAD_FR"/>
    <property type="match status" value="1"/>
</dbReference>
<dbReference type="PROSITE" id="PS00559">
    <property type="entry name" value="MOLYBDOPTERIN_EUK"/>
    <property type="match status" value="1"/>
</dbReference>
<proteinExistence type="evidence at protein level"/>
<name>NIA1_ARATH</name>
<gene>
    <name type="primary">NIA1</name>
    <name type="ordered locus">At1g77760</name>
    <name type="ORF">T32E8.9</name>
</gene>
<keyword id="KW-1015">Disulfide bond</keyword>
<keyword id="KW-0274">FAD</keyword>
<keyword id="KW-0285">Flavoprotein</keyword>
<keyword id="KW-0349">Heme</keyword>
<keyword id="KW-0359">Herbicide resistance</keyword>
<keyword id="KW-0408">Iron</keyword>
<keyword id="KW-0479">Metal-binding</keyword>
<keyword id="KW-0500">Molybdenum</keyword>
<keyword id="KW-0520">NAD</keyword>
<keyword id="KW-0534">Nitrate assimilation</keyword>
<keyword id="KW-0560">Oxidoreductase</keyword>
<keyword id="KW-1185">Reference proteome</keyword>
<comment type="function">
    <text>Nitrate reductase is a key enzyme involved in the first step of nitrate assimilation in plants, fungi and bacteria.</text>
</comment>
<comment type="catalytic activity">
    <reaction>
        <text>nitrite + NAD(+) + H2O = nitrate + NADH + H(+)</text>
        <dbReference type="Rhea" id="RHEA:17913"/>
        <dbReference type="ChEBI" id="CHEBI:15377"/>
        <dbReference type="ChEBI" id="CHEBI:15378"/>
        <dbReference type="ChEBI" id="CHEBI:16301"/>
        <dbReference type="ChEBI" id="CHEBI:17632"/>
        <dbReference type="ChEBI" id="CHEBI:57540"/>
        <dbReference type="ChEBI" id="CHEBI:57945"/>
        <dbReference type="EC" id="1.7.1.1"/>
    </reaction>
</comment>
<comment type="cofactor">
    <cofactor evidence="1">
        <name>FAD</name>
        <dbReference type="ChEBI" id="CHEBI:57692"/>
    </cofactor>
    <text evidence="1">Binds 1 FAD per subunit.</text>
</comment>
<comment type="cofactor">
    <cofactor evidence="1">
        <name>heme</name>
        <dbReference type="ChEBI" id="CHEBI:30413"/>
    </cofactor>
    <text evidence="1">Binds 1 heme group per subunit.</text>
</comment>
<comment type="cofactor">
    <cofactor evidence="1">
        <name>Mo-molybdopterin</name>
        <dbReference type="ChEBI" id="CHEBI:71302"/>
    </cofactor>
    <text evidence="1">Binds 1 Mo-molybdopterin (Mo-MPT) cofactor per subunit.</text>
</comment>
<comment type="subunit">
    <text>Homodimer.</text>
</comment>
<comment type="tissue specificity">
    <text>Root, leaf, and shoot.</text>
</comment>
<comment type="miscellaneous">
    <text>When mutated confers resistance to the herbicide chlorate.</text>
</comment>
<comment type="similarity">
    <text evidence="9">Belongs to the nitrate reductase family.</text>
</comment>
<sequence length="917" mass="103041">MATSVDNRHYPTMNGVAHAFKPPLVPSPRSFDRHRHQNQTLDVILTETKIVKETEVITTVVDSYDDSSSDDEDESHNRNVPYYKELVKKSNSDLEPSILDPRDESTADSWIQRNSSMLRLTGKHPFNAEAPLPRLMHHGFITPVPLHYVRNHGAVPKANWSDWSIEITGLVKRPAKFTMEELISEFPSREFPVTLVCAGNRRKEQNMVKQTIGFNWGSAGVSTSLWKGIPLSEILRRCGIYSRRGGALNVCFEGAEDLPGGGGSKYGTSIKKEMAMDPARDIILAYMQNGELLTPDHGFPVRVIVPGFIGGRMVKWLKRIIVTPQESDSYYHYKDNRVLPSLVDAELANSEAWWYKPEYIINELNINSVITTPGHAEILPINAFTTQKPYTLKGYAYSGGGKKVTRVEVTLDGGDTWSVCELDHQEKPNKYGKFWCWCFWSLDVEVLDLLSAKDVAVRAWDESFNTQPDKLIWNLMGMMNNCWFRIRTNVCKPHRGEIGIVFEHPTRPGNQSGGWMAKERQLEISSESNNTLKKSVSSPFMNTASKMYSISEVRKHNTADSAWIIVHGHIYDCTRFLKDHPGGTDSILINAGTDCTEEFEAIHSDKAKKLLEDYRIGELITTGYDSSPNVSVHGASNFGPLLAPIKELTPQKNIALVNPREKIPVRLIEKTSISHDVRKFRFALPSEDQQLGLPVGKHVFVCANINDKLCLRAYTPTSAIDAVGHIDLVVKVYFKDVHPRFPNGGLMSQHLDSLPIGSMIDIKGPLGHIEYKGKGNFLVSGKPKFAKKLAMLAGGTGITPIYQIIQSILSDPEDETEMYVVYANRTEDDILVREELEGWASKHKERLKIWYVVEIAKEGWSYSTGFITEAVLREHIPEGLEGESLALACGPPPMIQFALQPNLEKMGYNVKEDLLIF</sequence>
<organism>
    <name type="scientific">Arabidopsis thaliana</name>
    <name type="common">Mouse-ear cress</name>
    <dbReference type="NCBI Taxonomy" id="3702"/>
    <lineage>
        <taxon>Eukaryota</taxon>
        <taxon>Viridiplantae</taxon>
        <taxon>Streptophyta</taxon>
        <taxon>Embryophyta</taxon>
        <taxon>Tracheophyta</taxon>
        <taxon>Spermatophyta</taxon>
        <taxon>Magnoliopsida</taxon>
        <taxon>eudicotyledons</taxon>
        <taxon>Gunneridae</taxon>
        <taxon>Pentapetalae</taxon>
        <taxon>rosids</taxon>
        <taxon>malvids</taxon>
        <taxon>Brassicales</taxon>
        <taxon>Brassicaceae</taxon>
        <taxon>Camelineae</taxon>
        <taxon>Arabidopsis</taxon>
    </lineage>
</organism>
<evidence type="ECO:0000250" key="1"/>
<evidence type="ECO:0000250" key="2">
    <source>
        <dbReference type="UniProtKB" id="A0A286R227"/>
    </source>
</evidence>
<evidence type="ECO:0000250" key="3">
    <source>
        <dbReference type="UniProtKB" id="P17571"/>
    </source>
</evidence>
<evidence type="ECO:0000250" key="4">
    <source>
        <dbReference type="UniProtKB" id="P49050"/>
    </source>
</evidence>
<evidence type="ECO:0000255" key="5"/>
<evidence type="ECO:0000255" key="6">
    <source>
        <dbReference type="PROSITE-ProRule" id="PRU00279"/>
    </source>
</evidence>
<evidence type="ECO:0000255" key="7">
    <source>
        <dbReference type="PROSITE-ProRule" id="PRU00716"/>
    </source>
</evidence>
<evidence type="ECO:0000256" key="8">
    <source>
        <dbReference type="SAM" id="MobiDB-lite"/>
    </source>
</evidence>
<evidence type="ECO:0000305" key="9"/>
<feature type="chain" id="PRO_0000166049" description="Nitrate reductase [NADH] 1">
    <location>
        <begin position="1"/>
        <end position="917"/>
    </location>
</feature>
<feature type="domain" description="Cytochrome b5 heme-binding" evidence="6">
    <location>
        <begin position="545"/>
        <end position="620"/>
    </location>
</feature>
<feature type="domain" description="FAD-binding FR-type" evidence="7">
    <location>
        <begin position="660"/>
        <end position="772"/>
    </location>
</feature>
<feature type="region of interest" description="Disordered" evidence="8">
    <location>
        <begin position="62"/>
        <end position="81"/>
    </location>
</feature>
<feature type="compositionally biased region" description="Acidic residues" evidence="8">
    <location>
        <begin position="63"/>
        <end position="74"/>
    </location>
</feature>
<feature type="binding site" evidence="4">
    <location>
        <position position="197"/>
    </location>
    <ligand>
        <name>Mo-molybdopterin</name>
        <dbReference type="ChEBI" id="CHEBI:71302"/>
    </ligand>
    <ligandPart>
        <name>Mo</name>
        <dbReference type="ChEBI" id="CHEBI:28685"/>
    </ligandPart>
</feature>
<feature type="binding site" description="axial binding residue" evidence="6">
    <location>
        <position position="580"/>
    </location>
    <ligand>
        <name>heme</name>
        <dbReference type="ChEBI" id="CHEBI:30413"/>
    </ligand>
    <ligandPart>
        <name>Fe</name>
        <dbReference type="ChEBI" id="CHEBI:18248"/>
    </ligandPart>
</feature>
<feature type="binding site" description="axial binding residue" evidence="6">
    <location>
        <position position="603"/>
    </location>
    <ligand>
        <name>heme</name>
        <dbReference type="ChEBI" id="CHEBI:30413"/>
    </ligand>
    <ligandPart>
        <name>Fe</name>
        <dbReference type="ChEBI" id="CHEBI:18248"/>
    </ligandPart>
</feature>
<feature type="binding site" evidence="2">
    <location>
        <begin position="712"/>
        <end position="715"/>
    </location>
    <ligand>
        <name>FAD</name>
        <dbReference type="ChEBI" id="CHEBI:57692"/>
    </ligand>
</feature>
<feature type="binding site" evidence="2">
    <location>
        <begin position="729"/>
        <end position="733"/>
    </location>
    <ligand>
        <name>FAD</name>
        <dbReference type="ChEBI" id="CHEBI:57692"/>
    </ligand>
</feature>
<feature type="binding site" evidence="3">
    <location>
        <position position="734"/>
    </location>
    <ligand>
        <name>FAD</name>
        <dbReference type="ChEBI" id="CHEBI:57692"/>
    </ligand>
</feature>
<feature type="binding site" evidence="2">
    <location>
        <position position="741"/>
    </location>
    <ligand>
        <name>FAD</name>
        <dbReference type="ChEBI" id="CHEBI:57692"/>
    </ligand>
</feature>
<feature type="binding site" evidence="2">
    <location>
        <begin position="746"/>
        <end position="748"/>
    </location>
    <ligand>
        <name>FAD</name>
        <dbReference type="ChEBI" id="CHEBI:57692"/>
    </ligand>
</feature>
<feature type="binding site" evidence="2">
    <location>
        <position position="799"/>
    </location>
    <ligand>
        <name>FAD</name>
        <dbReference type="ChEBI" id="CHEBI:57692"/>
    </ligand>
</feature>
<feature type="disulfide bond" description="Interchain" evidence="5">
    <location>
        <position position="436"/>
    </location>
</feature>
<feature type="mutagenesis site" description="Loss of activity.">
    <original>A</original>
    <variation>T</variation>
    <location>
        <position position="198"/>
    </location>
</feature>
<feature type="sequence conflict" description="In Ref. 1; CAA79494." evidence="9" ref="1">
    <original>A</original>
    <variation>R</variation>
    <location>
        <position position="17"/>
    </location>
</feature>
<accession>P11832</accession>
<accession>Q9CA18</accession>
<reference key="1">
    <citation type="journal article" date="1993" name="Mol. Gen. Genet.">
        <title>Identification and characterization of a chlorate-resistant mutant of Arabidopsis thaliana with mutations in both nitrate reductase structural genes NIA1 and NIA2.</title>
        <authorList>
            <person name="Wilkinson J.Q."/>
            <person name="Crawford N.M."/>
        </authorList>
    </citation>
    <scope>NUCLEOTIDE SEQUENCE [GENOMIC DNA]</scope>
    <scope>MUTANT THR-198</scope>
    <scope>HERBICIDE RESISTANCE</scope>
    <source>
        <strain>cv. Columbia</strain>
    </source>
</reference>
<reference key="2">
    <citation type="journal article" date="2000" name="Nature">
        <title>Sequence and analysis of chromosome 1 of the plant Arabidopsis thaliana.</title>
        <authorList>
            <person name="Theologis A."/>
            <person name="Ecker J.R."/>
            <person name="Palm C.J."/>
            <person name="Federspiel N.A."/>
            <person name="Kaul S."/>
            <person name="White O."/>
            <person name="Alonso J."/>
            <person name="Altafi H."/>
            <person name="Araujo R."/>
            <person name="Bowman C.L."/>
            <person name="Brooks S.Y."/>
            <person name="Buehler E."/>
            <person name="Chan A."/>
            <person name="Chao Q."/>
            <person name="Chen H."/>
            <person name="Cheuk R.F."/>
            <person name="Chin C.W."/>
            <person name="Chung M.K."/>
            <person name="Conn L."/>
            <person name="Conway A.B."/>
            <person name="Conway A.R."/>
            <person name="Creasy T.H."/>
            <person name="Dewar K."/>
            <person name="Dunn P."/>
            <person name="Etgu P."/>
            <person name="Feldblyum T.V."/>
            <person name="Feng J.-D."/>
            <person name="Fong B."/>
            <person name="Fujii C.Y."/>
            <person name="Gill J.E."/>
            <person name="Goldsmith A.D."/>
            <person name="Haas B."/>
            <person name="Hansen N.F."/>
            <person name="Hughes B."/>
            <person name="Huizar L."/>
            <person name="Hunter J.L."/>
            <person name="Jenkins J."/>
            <person name="Johnson-Hopson C."/>
            <person name="Khan S."/>
            <person name="Khaykin E."/>
            <person name="Kim C.J."/>
            <person name="Koo H.L."/>
            <person name="Kremenetskaia I."/>
            <person name="Kurtz D.B."/>
            <person name="Kwan A."/>
            <person name="Lam B."/>
            <person name="Langin-Hooper S."/>
            <person name="Lee A."/>
            <person name="Lee J.M."/>
            <person name="Lenz C.A."/>
            <person name="Li J.H."/>
            <person name="Li Y.-P."/>
            <person name="Lin X."/>
            <person name="Liu S.X."/>
            <person name="Liu Z.A."/>
            <person name="Luros J.S."/>
            <person name="Maiti R."/>
            <person name="Marziali A."/>
            <person name="Militscher J."/>
            <person name="Miranda M."/>
            <person name="Nguyen M."/>
            <person name="Nierman W.C."/>
            <person name="Osborne B.I."/>
            <person name="Pai G."/>
            <person name="Peterson J."/>
            <person name="Pham P.K."/>
            <person name="Rizzo M."/>
            <person name="Rooney T."/>
            <person name="Rowley D."/>
            <person name="Sakano H."/>
            <person name="Salzberg S.L."/>
            <person name="Schwartz J.R."/>
            <person name="Shinn P."/>
            <person name="Southwick A.M."/>
            <person name="Sun H."/>
            <person name="Tallon L.J."/>
            <person name="Tambunga G."/>
            <person name="Toriumi M.J."/>
            <person name="Town C.D."/>
            <person name="Utterback T."/>
            <person name="Van Aken S."/>
            <person name="Vaysberg M."/>
            <person name="Vysotskaia V.S."/>
            <person name="Walker M."/>
            <person name="Wu D."/>
            <person name="Yu G."/>
            <person name="Fraser C.M."/>
            <person name="Venter J.C."/>
            <person name="Davis R.W."/>
        </authorList>
    </citation>
    <scope>NUCLEOTIDE SEQUENCE [LARGE SCALE GENOMIC DNA]</scope>
    <source>
        <strain>cv. Columbia</strain>
    </source>
</reference>
<reference key="3">
    <citation type="journal article" date="2017" name="Plant J.">
        <title>Araport11: a complete reannotation of the Arabidopsis thaliana reference genome.</title>
        <authorList>
            <person name="Cheng C.Y."/>
            <person name="Krishnakumar V."/>
            <person name="Chan A.P."/>
            <person name="Thibaud-Nissen F."/>
            <person name="Schobel S."/>
            <person name="Town C.D."/>
        </authorList>
    </citation>
    <scope>GENOME REANNOTATION</scope>
    <source>
        <strain>cv. Columbia</strain>
    </source>
</reference>
<reference key="4">
    <citation type="journal article" date="2003" name="Science">
        <title>Empirical analysis of transcriptional activity in the Arabidopsis genome.</title>
        <authorList>
            <person name="Yamada K."/>
            <person name="Lim J."/>
            <person name="Dale J.M."/>
            <person name="Chen H."/>
            <person name="Shinn P."/>
            <person name="Palm C.J."/>
            <person name="Southwick A.M."/>
            <person name="Wu H.C."/>
            <person name="Kim C.J."/>
            <person name="Nguyen M."/>
            <person name="Pham P.K."/>
            <person name="Cheuk R.F."/>
            <person name="Karlin-Newmann G."/>
            <person name="Liu S.X."/>
            <person name="Lam B."/>
            <person name="Sakano H."/>
            <person name="Wu T."/>
            <person name="Yu G."/>
            <person name="Miranda M."/>
            <person name="Quach H.L."/>
            <person name="Tripp M."/>
            <person name="Chang C.H."/>
            <person name="Lee J.M."/>
            <person name="Toriumi M.J."/>
            <person name="Chan M.M."/>
            <person name="Tang C.C."/>
            <person name="Onodera C.S."/>
            <person name="Deng J.M."/>
            <person name="Akiyama K."/>
            <person name="Ansari Y."/>
            <person name="Arakawa T."/>
            <person name="Banh J."/>
            <person name="Banno F."/>
            <person name="Bowser L."/>
            <person name="Brooks S.Y."/>
            <person name="Carninci P."/>
            <person name="Chao Q."/>
            <person name="Choy N."/>
            <person name="Enju A."/>
            <person name="Goldsmith A.D."/>
            <person name="Gurjal M."/>
            <person name="Hansen N.F."/>
            <person name="Hayashizaki Y."/>
            <person name="Johnson-Hopson C."/>
            <person name="Hsuan V.W."/>
            <person name="Iida K."/>
            <person name="Karnes M."/>
            <person name="Khan S."/>
            <person name="Koesema E."/>
            <person name="Ishida J."/>
            <person name="Jiang P.X."/>
            <person name="Jones T."/>
            <person name="Kawai J."/>
            <person name="Kamiya A."/>
            <person name="Meyers C."/>
            <person name="Nakajima M."/>
            <person name="Narusaka M."/>
            <person name="Seki M."/>
            <person name="Sakurai T."/>
            <person name="Satou M."/>
            <person name="Tamse R."/>
            <person name="Vaysberg M."/>
            <person name="Wallender E.K."/>
            <person name="Wong C."/>
            <person name="Yamamura Y."/>
            <person name="Yuan S."/>
            <person name="Shinozaki K."/>
            <person name="Davis R.W."/>
            <person name="Theologis A."/>
            <person name="Ecker J.R."/>
        </authorList>
    </citation>
    <scope>NUCLEOTIDE SEQUENCE [LARGE SCALE MRNA]</scope>
    <source>
        <strain>cv. Columbia</strain>
    </source>
</reference>
<reference key="5">
    <citation type="journal article" date="1988" name="EMBO J.">
        <title>A new locus (NIA 1) in Arabidopsis thaliana encoding nitrate reductase.</title>
        <authorList>
            <person name="Cheng C."/>
            <person name="Dewdney J."/>
            <person name="Nam H."/>
            <person name="den Boer B.G.W."/>
            <person name="Goodman H.M."/>
        </authorList>
    </citation>
    <scope>NUCLEOTIDE SEQUENCE OF 342-360 AND 525-917</scope>
</reference>
<reference key="6">
    <citation type="journal article" date="2009" name="J. Proteomics">
        <title>Phosphoproteomic analysis of nuclei-enriched fractions from Arabidopsis thaliana.</title>
        <authorList>
            <person name="Jones A.M.E."/>
            <person name="MacLean D."/>
            <person name="Studholme D.J."/>
            <person name="Serna-Sanz A."/>
            <person name="Andreasson E."/>
            <person name="Rathjen J.P."/>
            <person name="Peck S.C."/>
        </authorList>
    </citation>
    <scope>IDENTIFICATION BY MASS SPECTROMETRY [LARGE SCALE ANALYSIS]</scope>
    <source>
        <strain>cv. Columbia</strain>
    </source>
</reference>
<reference key="7">
    <citation type="journal article" date="2009" name="Plant Physiol.">
        <title>Large-scale Arabidopsis phosphoproteome profiling reveals novel chloroplast kinase substrates and phosphorylation networks.</title>
        <authorList>
            <person name="Reiland S."/>
            <person name="Messerli G."/>
            <person name="Baerenfaller K."/>
            <person name="Gerrits B."/>
            <person name="Endler A."/>
            <person name="Grossmann J."/>
            <person name="Gruissem W."/>
            <person name="Baginsky S."/>
        </authorList>
    </citation>
    <scope>IDENTIFICATION BY MASS SPECTROMETRY [LARGE SCALE ANALYSIS]</scope>
</reference>
<protein>
    <recommendedName>
        <fullName>Nitrate reductase [NADH] 1</fullName>
        <shortName>NR1</shortName>
        <ecNumber>1.7.1.1</ecNumber>
    </recommendedName>
</protein>